<accession>C1KWD6</accession>
<gene>
    <name evidence="1" type="primary">pyrC</name>
    <name type="ordered locus">Lm4b_01853</name>
</gene>
<sequence>MYVLKNGQVLNASGELENKDVLIQNGKVNLIADSIEVTSGEEFDATGKLIAPGFIDVHVHLREPGGEHKETILTGTQAAARGGYTTICSMPNTKPVPDSKEVMESLQAKIKETAKVRVLPYASITTSLGTDELVDFEALKEAGAFAFTDDGVGVQLAGTMYEAMKRAAALDMAIVAHCEDNSLIYGGVVHDGIFAEKEGLKGIPNIAESVQIARDVLLAEAAGCHYHVCHISTKESVRVVRDAKRAGIRVTAEVSPHHLILDEEAIPGNDGNWKMNPPLRSKEDRAALLEGLLDGTIDFIATDHAPHAAEEKNVPMEQAAFGIVGLETAFPLLYTHFVKTKEWTLKQLIDWMTVKPAECFKLPYGKLEEGSVADIVVLDLEKEANIDPATFYSKGKNTPFVGETCIGWPVATFSEGTLVYNEGEIK</sequence>
<keyword id="KW-0378">Hydrolase</keyword>
<keyword id="KW-0479">Metal-binding</keyword>
<keyword id="KW-0665">Pyrimidine biosynthesis</keyword>
<keyword id="KW-0862">Zinc</keyword>
<proteinExistence type="inferred from homology"/>
<organism>
    <name type="scientific">Listeria monocytogenes serotype 4b (strain CLIP80459)</name>
    <dbReference type="NCBI Taxonomy" id="568819"/>
    <lineage>
        <taxon>Bacteria</taxon>
        <taxon>Bacillati</taxon>
        <taxon>Bacillota</taxon>
        <taxon>Bacilli</taxon>
        <taxon>Bacillales</taxon>
        <taxon>Listeriaceae</taxon>
        <taxon>Listeria</taxon>
    </lineage>
</organism>
<name>PYRC_LISMC</name>
<evidence type="ECO:0000255" key="1">
    <source>
        <dbReference type="HAMAP-Rule" id="MF_00220"/>
    </source>
</evidence>
<reference key="1">
    <citation type="journal article" date="2012" name="BMC Genomics">
        <title>Comparative genomics and transcriptomics of lineages I, II, and III strains of Listeria monocytogenes.</title>
        <authorList>
            <person name="Hain T."/>
            <person name="Ghai R."/>
            <person name="Billion A."/>
            <person name="Kuenne C.T."/>
            <person name="Steinweg C."/>
            <person name="Izar B."/>
            <person name="Mohamed W."/>
            <person name="Mraheil M."/>
            <person name="Domann E."/>
            <person name="Schaffrath S."/>
            <person name="Karst U."/>
            <person name="Goesmann A."/>
            <person name="Oehm S."/>
            <person name="Puhler A."/>
            <person name="Merkl R."/>
            <person name="Vorwerk S."/>
            <person name="Glaser P."/>
            <person name="Garrido P."/>
            <person name="Rusniok C."/>
            <person name="Buchrieser C."/>
            <person name="Goebel W."/>
            <person name="Chakraborty T."/>
        </authorList>
    </citation>
    <scope>NUCLEOTIDE SEQUENCE [LARGE SCALE GENOMIC DNA]</scope>
    <source>
        <strain>CLIP80459</strain>
    </source>
</reference>
<dbReference type="EC" id="3.5.2.3" evidence="1"/>
<dbReference type="EMBL" id="FM242711">
    <property type="protein sequence ID" value="CAS05611.1"/>
    <property type="molecule type" value="Genomic_DNA"/>
</dbReference>
<dbReference type="SMR" id="C1KWD6"/>
<dbReference type="KEGG" id="lmc:Lm4b_01853"/>
<dbReference type="HOGENOM" id="CLU_015572_1_0_9"/>
<dbReference type="UniPathway" id="UPA00070">
    <property type="reaction ID" value="UER00117"/>
</dbReference>
<dbReference type="GO" id="GO:0005737">
    <property type="term" value="C:cytoplasm"/>
    <property type="evidence" value="ECO:0007669"/>
    <property type="project" value="TreeGrafter"/>
</dbReference>
<dbReference type="GO" id="GO:0004038">
    <property type="term" value="F:allantoinase activity"/>
    <property type="evidence" value="ECO:0007669"/>
    <property type="project" value="TreeGrafter"/>
</dbReference>
<dbReference type="GO" id="GO:0004151">
    <property type="term" value="F:dihydroorotase activity"/>
    <property type="evidence" value="ECO:0007669"/>
    <property type="project" value="UniProtKB-UniRule"/>
</dbReference>
<dbReference type="GO" id="GO:0008270">
    <property type="term" value="F:zinc ion binding"/>
    <property type="evidence" value="ECO:0007669"/>
    <property type="project" value="UniProtKB-UniRule"/>
</dbReference>
<dbReference type="GO" id="GO:0044205">
    <property type="term" value="P:'de novo' UMP biosynthetic process"/>
    <property type="evidence" value="ECO:0007669"/>
    <property type="project" value="UniProtKB-UniRule"/>
</dbReference>
<dbReference type="GO" id="GO:0006145">
    <property type="term" value="P:purine nucleobase catabolic process"/>
    <property type="evidence" value="ECO:0007669"/>
    <property type="project" value="TreeGrafter"/>
</dbReference>
<dbReference type="CDD" id="cd01317">
    <property type="entry name" value="DHOase_IIa"/>
    <property type="match status" value="1"/>
</dbReference>
<dbReference type="Gene3D" id="3.20.20.140">
    <property type="entry name" value="Metal-dependent hydrolases"/>
    <property type="match status" value="1"/>
</dbReference>
<dbReference type="Gene3D" id="2.30.40.10">
    <property type="entry name" value="Urease, subunit C, domain 1"/>
    <property type="match status" value="1"/>
</dbReference>
<dbReference type="HAMAP" id="MF_00220_B">
    <property type="entry name" value="PyrC_classI_B"/>
    <property type="match status" value="1"/>
</dbReference>
<dbReference type="InterPro" id="IPR006680">
    <property type="entry name" value="Amidohydro-rel"/>
</dbReference>
<dbReference type="InterPro" id="IPR004722">
    <property type="entry name" value="DHOase"/>
</dbReference>
<dbReference type="InterPro" id="IPR050138">
    <property type="entry name" value="DHOase/Allantoinase_Hydrolase"/>
</dbReference>
<dbReference type="InterPro" id="IPR002195">
    <property type="entry name" value="Dihydroorotase_CS"/>
</dbReference>
<dbReference type="InterPro" id="IPR011059">
    <property type="entry name" value="Metal-dep_hydrolase_composite"/>
</dbReference>
<dbReference type="InterPro" id="IPR032466">
    <property type="entry name" value="Metal_Hydrolase"/>
</dbReference>
<dbReference type="NCBIfam" id="NF006837">
    <property type="entry name" value="PRK09357.1-2"/>
    <property type="match status" value="1"/>
</dbReference>
<dbReference type="NCBIfam" id="TIGR00857">
    <property type="entry name" value="pyrC_multi"/>
    <property type="match status" value="1"/>
</dbReference>
<dbReference type="PANTHER" id="PTHR43668">
    <property type="entry name" value="ALLANTOINASE"/>
    <property type="match status" value="1"/>
</dbReference>
<dbReference type="PANTHER" id="PTHR43668:SF2">
    <property type="entry name" value="ALLANTOINASE"/>
    <property type="match status" value="1"/>
</dbReference>
<dbReference type="Pfam" id="PF01979">
    <property type="entry name" value="Amidohydro_1"/>
    <property type="match status" value="1"/>
</dbReference>
<dbReference type="SUPFAM" id="SSF51338">
    <property type="entry name" value="Composite domain of metallo-dependent hydrolases"/>
    <property type="match status" value="1"/>
</dbReference>
<dbReference type="SUPFAM" id="SSF51556">
    <property type="entry name" value="Metallo-dependent hydrolases"/>
    <property type="match status" value="1"/>
</dbReference>
<dbReference type="PROSITE" id="PS00482">
    <property type="entry name" value="DIHYDROOROTASE_1"/>
    <property type="match status" value="1"/>
</dbReference>
<dbReference type="PROSITE" id="PS00483">
    <property type="entry name" value="DIHYDROOROTASE_2"/>
    <property type="match status" value="1"/>
</dbReference>
<comment type="function">
    <text evidence="1">Catalyzes the reversible cyclization of carbamoyl aspartate to dihydroorotate.</text>
</comment>
<comment type="catalytic activity">
    <reaction evidence="1">
        <text>(S)-dihydroorotate + H2O = N-carbamoyl-L-aspartate + H(+)</text>
        <dbReference type="Rhea" id="RHEA:24296"/>
        <dbReference type="ChEBI" id="CHEBI:15377"/>
        <dbReference type="ChEBI" id="CHEBI:15378"/>
        <dbReference type="ChEBI" id="CHEBI:30864"/>
        <dbReference type="ChEBI" id="CHEBI:32814"/>
        <dbReference type="EC" id="3.5.2.3"/>
    </reaction>
</comment>
<comment type="cofactor">
    <cofactor evidence="1">
        <name>Zn(2+)</name>
        <dbReference type="ChEBI" id="CHEBI:29105"/>
    </cofactor>
    <text evidence="1">Binds 2 Zn(2+) ions per subunit.</text>
</comment>
<comment type="pathway">
    <text evidence="1">Pyrimidine metabolism; UMP biosynthesis via de novo pathway; (S)-dihydroorotate from bicarbonate: step 3/3.</text>
</comment>
<comment type="similarity">
    <text evidence="1">Belongs to the metallo-dependent hydrolases superfamily. DHOase family. Class I DHOase subfamily.</text>
</comment>
<feature type="chain" id="PRO_1000204254" description="Dihydroorotase">
    <location>
        <begin position="1"/>
        <end position="426"/>
    </location>
</feature>
<feature type="active site" evidence="1">
    <location>
        <position position="303"/>
    </location>
</feature>
<feature type="binding site" evidence="1">
    <location>
        <position position="58"/>
    </location>
    <ligand>
        <name>Zn(2+)</name>
        <dbReference type="ChEBI" id="CHEBI:29105"/>
        <label>1</label>
    </ligand>
</feature>
<feature type="binding site" evidence="1">
    <location>
        <begin position="60"/>
        <end position="62"/>
    </location>
    <ligand>
        <name>substrate</name>
    </ligand>
</feature>
<feature type="binding site" evidence="1">
    <location>
        <position position="60"/>
    </location>
    <ligand>
        <name>Zn(2+)</name>
        <dbReference type="ChEBI" id="CHEBI:29105"/>
        <label>1</label>
    </ligand>
</feature>
<feature type="binding site" evidence="1">
    <location>
        <position position="92"/>
    </location>
    <ligand>
        <name>substrate</name>
    </ligand>
</feature>
<feature type="binding site" evidence="1">
    <location>
        <position position="150"/>
    </location>
    <ligand>
        <name>Zn(2+)</name>
        <dbReference type="ChEBI" id="CHEBI:29105"/>
        <label>1</label>
    </ligand>
</feature>
<feature type="binding site" evidence="1">
    <location>
        <position position="150"/>
    </location>
    <ligand>
        <name>Zn(2+)</name>
        <dbReference type="ChEBI" id="CHEBI:29105"/>
        <label>2</label>
    </ligand>
</feature>
<feature type="binding site" evidence="1">
    <location>
        <position position="177"/>
    </location>
    <ligand>
        <name>Zn(2+)</name>
        <dbReference type="ChEBI" id="CHEBI:29105"/>
        <label>2</label>
    </ligand>
</feature>
<feature type="binding site" evidence="1">
    <location>
        <position position="230"/>
    </location>
    <ligand>
        <name>Zn(2+)</name>
        <dbReference type="ChEBI" id="CHEBI:29105"/>
        <label>2</label>
    </ligand>
</feature>
<feature type="binding site" evidence="1">
    <location>
        <position position="276"/>
    </location>
    <ligand>
        <name>substrate</name>
    </ligand>
</feature>
<feature type="binding site" evidence="1">
    <location>
        <position position="303"/>
    </location>
    <ligand>
        <name>Zn(2+)</name>
        <dbReference type="ChEBI" id="CHEBI:29105"/>
        <label>1</label>
    </ligand>
</feature>
<feature type="binding site" evidence="1">
    <location>
        <position position="307"/>
    </location>
    <ligand>
        <name>substrate</name>
    </ligand>
</feature>
<feature type="binding site" evidence="1">
    <location>
        <begin position="321"/>
        <end position="322"/>
    </location>
    <ligand>
        <name>substrate</name>
    </ligand>
</feature>
<protein>
    <recommendedName>
        <fullName evidence="1">Dihydroorotase</fullName>
        <shortName evidence="1">DHOase</shortName>
        <ecNumber evidence="1">3.5.2.3</ecNumber>
    </recommendedName>
</protein>